<organism>
    <name type="scientific">Leuconostoc mesenteroides subsp. mesenteroides (strain ATCC 8293 / DSM 20343 / BCRC 11652 / CCM 1803 / JCM 6124 / NCDO 523 / NBRC 100496 / NCIMB 8023 / NCTC 12954 / NRRL B-1118 / 37Y)</name>
    <dbReference type="NCBI Taxonomy" id="203120"/>
    <lineage>
        <taxon>Bacteria</taxon>
        <taxon>Bacillati</taxon>
        <taxon>Bacillota</taxon>
        <taxon>Bacilli</taxon>
        <taxon>Lactobacillales</taxon>
        <taxon>Lactobacillaceae</taxon>
        <taxon>Leuconostoc</taxon>
    </lineage>
</organism>
<feature type="chain" id="PRO_0000067752" description="DNA-directed RNA polymerase subunit beta'">
    <location>
        <begin position="1"/>
        <end position="1220"/>
    </location>
</feature>
<feature type="region of interest" description="Disordered" evidence="2">
    <location>
        <begin position="1197"/>
        <end position="1220"/>
    </location>
</feature>
<feature type="compositionally biased region" description="Basic and acidic residues" evidence="2">
    <location>
        <begin position="1207"/>
        <end position="1220"/>
    </location>
</feature>
<feature type="binding site" evidence="1">
    <location>
        <position position="61"/>
    </location>
    <ligand>
        <name>Zn(2+)</name>
        <dbReference type="ChEBI" id="CHEBI:29105"/>
    </ligand>
</feature>
<feature type="binding site" evidence="1">
    <location>
        <position position="63"/>
    </location>
    <ligand>
        <name>Zn(2+)</name>
        <dbReference type="ChEBI" id="CHEBI:29105"/>
    </ligand>
</feature>
<feature type="binding site" evidence="1">
    <location>
        <position position="76"/>
    </location>
    <ligand>
        <name>Zn(2+)</name>
        <dbReference type="ChEBI" id="CHEBI:29105"/>
    </ligand>
</feature>
<feature type="binding site" evidence="1">
    <location>
        <position position="79"/>
    </location>
    <ligand>
        <name>Zn(2+)</name>
        <dbReference type="ChEBI" id="CHEBI:29105"/>
    </ligand>
</feature>
<feature type="binding site" evidence="1">
    <location>
        <position position="450"/>
    </location>
    <ligand>
        <name>Mg(2+)</name>
        <dbReference type="ChEBI" id="CHEBI:18420"/>
    </ligand>
</feature>
<feature type="binding site" evidence="1">
    <location>
        <position position="452"/>
    </location>
    <ligand>
        <name>Mg(2+)</name>
        <dbReference type="ChEBI" id="CHEBI:18420"/>
    </ligand>
</feature>
<feature type="binding site" evidence="1">
    <location>
        <position position="454"/>
    </location>
    <ligand>
        <name>Mg(2+)</name>
        <dbReference type="ChEBI" id="CHEBI:18420"/>
    </ligand>
</feature>
<feature type="sequence conflict" description="In Ref. 2; CAA65077." evidence="3" ref="2">
    <original>V</original>
    <variation>A</variation>
    <location>
        <position position="827"/>
    </location>
</feature>
<feature type="sequence conflict" description="In Ref. 2; CAA65077." evidence="3" ref="2">
    <original>D</original>
    <variation>V</variation>
    <location>
        <position position="842"/>
    </location>
</feature>
<feature type="sequence conflict" description="In Ref. 2; CAA65077." evidence="3" ref="2">
    <original>V</original>
    <variation>C</variation>
    <location>
        <position position="863"/>
    </location>
</feature>
<feature type="sequence conflict" description="In Ref. 2; CAA65077." evidence="3" ref="2">
    <original>A</original>
    <variation>E</variation>
    <location>
        <position position="988"/>
    </location>
</feature>
<feature type="sequence conflict" description="In Ref. 2; CAA65077." evidence="3" ref="2">
    <original>T</original>
    <variation>A</variation>
    <location>
        <position position="991"/>
    </location>
</feature>
<proteinExistence type="inferred from homology"/>
<gene>
    <name evidence="1" type="primary">rpoC</name>
    <name type="ordered locus">LEUM_1824</name>
</gene>
<sequence length="1220" mass="135789">MAIDVNKFESMQIALASPDKIRSWSYGEVKKPETINYRTLKPEKDGLFDERIFGPTKDYECACGKYKRIRYKGIVCDRCGVEVTSSKVRRERMGHIELAAPVTHIWYFKGIPSRMGLVLDMSPRSLEEIIYFASYVVIEPGDAPVEKKQMMTEREYRQLKKEYGAGFKAGMGAEAIKELLANVDLATEADELKRELQEATGQKRVRAVRRLDIIEAFLQSDNKPEWMVMEVIPVIPPDLRPMVQLEGGRFATSDLNDLYRRVINRNNRLKRLLDLNAPGIIVQNEKRMLQEAVDALIDNGRRGRPVAGPGNRPLKSLSHMLKGKQGRFRQNLLGKRVDYSGRSVIDVGPFLKMNQMGLPVPMAIELFRPFIMKELTTRKLAGNVKSAKRKIDKADGDVMDVLEDVIKEHPVLLNRAPTLHRLGIQAFEPVLVSGKAMRLHPLVTEAYNADFDGDQMAIHVPLSDEAQAEARLLMLAAGHILAPKDGKPIVAPSQDMVIGNYYLTTEEAGREGEGMIFSSVDEARIAFASKVVHYHTRVGIQTSSFPSEKPFTDEQRSKIMITSVGKLFFNEILPSDFPYINEPSEDNFKRVDDSFFIDAGENIHDYLADTSIVNPFKKGFLSDIIAEVYKRYKVTETSLLLDRMKDLGYDKSTESGLTVSMTDVLELEEKPAILEDAHSQVATVTKQFRRGLITDSERYQRVTEIWTKAKDIIQDKLIESFEPTNPIFMMQDSGARGNISNFVQLAGMRGLMAGPGGKIIELPVTANFREGLTVMEMFISTHGARKGMSDTALKTANSGYLTRRLVDVAQDVIVREFDNDSDRGVAVQAIMDGTSVVEPLYDRILGRYAMKSVFDPETDEKIVSRNEMIDEDVAKKIVNAGIKEVTIRSVFTSTTEHGVSVLDYGRNLASGEEVEVGEAVGTVAAQSIGEPGTQLTMRNFHTGGVAGGNDITQGLPRVQEIVEARIPKGRAEISEVTGTITVIEENPADRTKSVTIEGETDTRTYTLPLTTRMRFGEGDEIKRGEAINEGPIDPKELLAVTDTLTTESYMLTEIQKVYRLQGIEVSDKHIEVMIRQMLRKIRVMDPGQTDLLPGTLMDIADFKRANEPALFEGLVPATARPVLLGITKAALETNSFLSAASFQETTRVLTDAAIRGKNDPLVGLKENVIIGKIIPAGTGMAEYRKIKSKVVGDVIAQPESESEEASDIPKLDDVAKTFDN</sequence>
<accession>P94892</accession>
<accession>Q03V61</accession>
<comment type="function">
    <text evidence="1">DNA-dependent RNA polymerase catalyzes the transcription of DNA into RNA using the four ribonucleoside triphosphates as substrates.</text>
</comment>
<comment type="catalytic activity">
    <reaction evidence="1">
        <text>RNA(n) + a ribonucleoside 5'-triphosphate = RNA(n+1) + diphosphate</text>
        <dbReference type="Rhea" id="RHEA:21248"/>
        <dbReference type="Rhea" id="RHEA-COMP:14527"/>
        <dbReference type="Rhea" id="RHEA-COMP:17342"/>
        <dbReference type="ChEBI" id="CHEBI:33019"/>
        <dbReference type="ChEBI" id="CHEBI:61557"/>
        <dbReference type="ChEBI" id="CHEBI:140395"/>
        <dbReference type="EC" id="2.7.7.6"/>
    </reaction>
</comment>
<comment type="cofactor">
    <cofactor evidence="1">
        <name>Mg(2+)</name>
        <dbReference type="ChEBI" id="CHEBI:18420"/>
    </cofactor>
    <text evidence="1">Binds 1 Mg(2+) ion per subunit.</text>
</comment>
<comment type="cofactor">
    <cofactor evidence="1">
        <name>Zn(2+)</name>
        <dbReference type="ChEBI" id="CHEBI:29105"/>
    </cofactor>
    <text evidence="3">Binds 1 Zn(2+) ion per subunit; 2 are expected compared to other organisms.</text>
</comment>
<comment type="subunit">
    <text evidence="1">The RNAP catalytic core consists of 2 alpha, 1 beta, 1 beta' and 1 omega subunit. When a sigma factor is associated with the core the holoenzyme is formed, which can initiate transcription.</text>
</comment>
<comment type="similarity">
    <text evidence="1">Belongs to the RNA polymerase beta' chain family.</text>
</comment>
<protein>
    <recommendedName>
        <fullName evidence="1">DNA-directed RNA polymerase subunit beta'</fullName>
        <shortName evidence="1">RNAP subunit beta'</shortName>
        <ecNumber evidence="1">2.7.7.6</ecNumber>
    </recommendedName>
    <alternativeName>
        <fullName evidence="1">RNA polymerase subunit beta'</fullName>
    </alternativeName>
    <alternativeName>
        <fullName evidence="1">Transcriptase subunit beta'</fullName>
    </alternativeName>
</protein>
<dbReference type="EC" id="2.7.7.6" evidence="1"/>
<dbReference type="EMBL" id="CP000414">
    <property type="protein sequence ID" value="ABJ62911.1"/>
    <property type="molecule type" value="Genomic_DNA"/>
</dbReference>
<dbReference type="EMBL" id="X95810">
    <property type="protein sequence ID" value="CAA65077.1"/>
    <property type="molecule type" value="Genomic_DNA"/>
</dbReference>
<dbReference type="RefSeq" id="WP_011680407.1">
    <property type="nucleotide sequence ID" value="NC_008531.1"/>
</dbReference>
<dbReference type="SMR" id="P94892"/>
<dbReference type="EnsemblBacteria" id="ABJ62911">
    <property type="protein sequence ID" value="ABJ62911"/>
    <property type="gene ID" value="LEUM_1824"/>
</dbReference>
<dbReference type="GeneID" id="29577010"/>
<dbReference type="KEGG" id="lme:LEUM_1824"/>
<dbReference type="eggNOG" id="COG0086">
    <property type="taxonomic scope" value="Bacteria"/>
</dbReference>
<dbReference type="HOGENOM" id="CLU_000524_3_1_9"/>
<dbReference type="Proteomes" id="UP000000362">
    <property type="component" value="Chromosome"/>
</dbReference>
<dbReference type="GO" id="GO:0000428">
    <property type="term" value="C:DNA-directed RNA polymerase complex"/>
    <property type="evidence" value="ECO:0007669"/>
    <property type="project" value="UniProtKB-KW"/>
</dbReference>
<dbReference type="GO" id="GO:0003677">
    <property type="term" value="F:DNA binding"/>
    <property type="evidence" value="ECO:0007669"/>
    <property type="project" value="UniProtKB-UniRule"/>
</dbReference>
<dbReference type="GO" id="GO:0003899">
    <property type="term" value="F:DNA-directed RNA polymerase activity"/>
    <property type="evidence" value="ECO:0007669"/>
    <property type="project" value="UniProtKB-UniRule"/>
</dbReference>
<dbReference type="GO" id="GO:0000287">
    <property type="term" value="F:magnesium ion binding"/>
    <property type="evidence" value="ECO:0007669"/>
    <property type="project" value="UniProtKB-UniRule"/>
</dbReference>
<dbReference type="GO" id="GO:0008270">
    <property type="term" value="F:zinc ion binding"/>
    <property type="evidence" value="ECO:0007669"/>
    <property type="project" value="UniProtKB-UniRule"/>
</dbReference>
<dbReference type="GO" id="GO:0006351">
    <property type="term" value="P:DNA-templated transcription"/>
    <property type="evidence" value="ECO:0007669"/>
    <property type="project" value="UniProtKB-UniRule"/>
</dbReference>
<dbReference type="CDD" id="cd02655">
    <property type="entry name" value="RNAP_beta'_C"/>
    <property type="match status" value="1"/>
</dbReference>
<dbReference type="CDD" id="cd01609">
    <property type="entry name" value="RNAP_beta'_N"/>
    <property type="match status" value="1"/>
</dbReference>
<dbReference type="FunFam" id="1.10.150.390:FF:000002">
    <property type="entry name" value="DNA-directed RNA polymerase subunit beta"/>
    <property type="match status" value="1"/>
</dbReference>
<dbReference type="FunFam" id="4.10.860.120:FF:000001">
    <property type="entry name" value="DNA-directed RNA polymerase subunit beta"/>
    <property type="match status" value="1"/>
</dbReference>
<dbReference type="Gene3D" id="1.10.132.30">
    <property type="match status" value="1"/>
</dbReference>
<dbReference type="Gene3D" id="1.10.150.390">
    <property type="match status" value="1"/>
</dbReference>
<dbReference type="Gene3D" id="1.10.1790.20">
    <property type="match status" value="1"/>
</dbReference>
<dbReference type="Gene3D" id="1.10.40.90">
    <property type="match status" value="1"/>
</dbReference>
<dbReference type="Gene3D" id="2.40.40.20">
    <property type="match status" value="1"/>
</dbReference>
<dbReference type="Gene3D" id="2.40.50.100">
    <property type="match status" value="1"/>
</dbReference>
<dbReference type="Gene3D" id="4.10.860.120">
    <property type="entry name" value="RNA polymerase II, clamp domain"/>
    <property type="match status" value="1"/>
</dbReference>
<dbReference type="Gene3D" id="1.10.274.100">
    <property type="entry name" value="RNA polymerase Rpb1, domain 3"/>
    <property type="match status" value="1"/>
</dbReference>
<dbReference type="HAMAP" id="MF_01322">
    <property type="entry name" value="RNApol_bact_RpoC"/>
    <property type="match status" value="1"/>
</dbReference>
<dbReference type="InterPro" id="IPR045867">
    <property type="entry name" value="DNA-dir_RpoC_beta_prime"/>
</dbReference>
<dbReference type="InterPro" id="IPR012754">
    <property type="entry name" value="DNA-dir_RpoC_beta_prime_bact"/>
</dbReference>
<dbReference type="InterPro" id="IPR000722">
    <property type="entry name" value="RNA_pol_asu"/>
</dbReference>
<dbReference type="InterPro" id="IPR006592">
    <property type="entry name" value="RNA_pol_N"/>
</dbReference>
<dbReference type="InterPro" id="IPR007080">
    <property type="entry name" value="RNA_pol_Rpb1_1"/>
</dbReference>
<dbReference type="InterPro" id="IPR007066">
    <property type="entry name" value="RNA_pol_Rpb1_3"/>
</dbReference>
<dbReference type="InterPro" id="IPR042102">
    <property type="entry name" value="RNA_pol_Rpb1_3_sf"/>
</dbReference>
<dbReference type="InterPro" id="IPR007083">
    <property type="entry name" value="RNA_pol_Rpb1_4"/>
</dbReference>
<dbReference type="InterPro" id="IPR007081">
    <property type="entry name" value="RNA_pol_Rpb1_5"/>
</dbReference>
<dbReference type="InterPro" id="IPR044893">
    <property type="entry name" value="RNA_pol_Rpb1_clamp_domain"/>
</dbReference>
<dbReference type="InterPro" id="IPR038120">
    <property type="entry name" value="Rpb1_funnel_sf"/>
</dbReference>
<dbReference type="NCBIfam" id="TIGR02386">
    <property type="entry name" value="rpoC_TIGR"/>
    <property type="match status" value="1"/>
</dbReference>
<dbReference type="PANTHER" id="PTHR19376">
    <property type="entry name" value="DNA-DIRECTED RNA POLYMERASE"/>
    <property type="match status" value="1"/>
</dbReference>
<dbReference type="PANTHER" id="PTHR19376:SF54">
    <property type="entry name" value="DNA-DIRECTED RNA POLYMERASE SUBUNIT BETA"/>
    <property type="match status" value="1"/>
</dbReference>
<dbReference type="Pfam" id="PF04997">
    <property type="entry name" value="RNA_pol_Rpb1_1"/>
    <property type="match status" value="1"/>
</dbReference>
<dbReference type="Pfam" id="PF00623">
    <property type="entry name" value="RNA_pol_Rpb1_2"/>
    <property type="match status" value="2"/>
</dbReference>
<dbReference type="Pfam" id="PF04983">
    <property type="entry name" value="RNA_pol_Rpb1_3"/>
    <property type="match status" value="1"/>
</dbReference>
<dbReference type="Pfam" id="PF05000">
    <property type="entry name" value="RNA_pol_Rpb1_4"/>
    <property type="match status" value="1"/>
</dbReference>
<dbReference type="Pfam" id="PF04998">
    <property type="entry name" value="RNA_pol_Rpb1_5"/>
    <property type="match status" value="1"/>
</dbReference>
<dbReference type="SMART" id="SM00663">
    <property type="entry name" value="RPOLA_N"/>
    <property type="match status" value="1"/>
</dbReference>
<dbReference type="SUPFAM" id="SSF64484">
    <property type="entry name" value="beta and beta-prime subunits of DNA dependent RNA-polymerase"/>
    <property type="match status" value="1"/>
</dbReference>
<keyword id="KW-0240">DNA-directed RNA polymerase</keyword>
<keyword id="KW-0460">Magnesium</keyword>
<keyword id="KW-0479">Metal-binding</keyword>
<keyword id="KW-0548">Nucleotidyltransferase</keyword>
<keyword id="KW-1185">Reference proteome</keyword>
<keyword id="KW-0804">Transcription</keyword>
<keyword id="KW-0808">Transferase</keyword>
<keyword id="KW-0862">Zinc</keyword>
<evidence type="ECO:0000255" key="1">
    <source>
        <dbReference type="HAMAP-Rule" id="MF_01322"/>
    </source>
</evidence>
<evidence type="ECO:0000256" key="2">
    <source>
        <dbReference type="SAM" id="MobiDB-lite"/>
    </source>
</evidence>
<evidence type="ECO:0000305" key="3"/>
<reference key="1">
    <citation type="journal article" date="2006" name="Proc. Natl. Acad. Sci. U.S.A.">
        <title>Comparative genomics of the lactic acid bacteria.</title>
        <authorList>
            <person name="Makarova K.S."/>
            <person name="Slesarev A."/>
            <person name="Wolf Y.I."/>
            <person name="Sorokin A."/>
            <person name="Mirkin B."/>
            <person name="Koonin E.V."/>
            <person name="Pavlov A."/>
            <person name="Pavlova N."/>
            <person name="Karamychev V."/>
            <person name="Polouchine N."/>
            <person name="Shakhova V."/>
            <person name="Grigoriev I."/>
            <person name="Lou Y."/>
            <person name="Rohksar D."/>
            <person name="Lucas S."/>
            <person name="Huang K."/>
            <person name="Goodstein D.M."/>
            <person name="Hawkins T."/>
            <person name="Plengvidhya V."/>
            <person name="Welker D."/>
            <person name="Hughes J."/>
            <person name="Goh Y."/>
            <person name="Benson A."/>
            <person name="Baldwin K."/>
            <person name="Lee J.-H."/>
            <person name="Diaz-Muniz I."/>
            <person name="Dosti B."/>
            <person name="Smeianov V."/>
            <person name="Wechter W."/>
            <person name="Barabote R."/>
            <person name="Lorca G."/>
            <person name="Altermann E."/>
            <person name="Barrangou R."/>
            <person name="Ganesan B."/>
            <person name="Xie Y."/>
            <person name="Rawsthorne H."/>
            <person name="Tamir D."/>
            <person name="Parker C."/>
            <person name="Breidt F."/>
            <person name="Broadbent J.R."/>
            <person name="Hutkins R."/>
            <person name="O'Sullivan D."/>
            <person name="Steele J."/>
            <person name="Unlu G."/>
            <person name="Saier M.H. Jr."/>
            <person name="Klaenhammer T."/>
            <person name="Richardson P."/>
            <person name="Kozyavkin S."/>
            <person name="Weimer B.C."/>
            <person name="Mills D.A."/>
        </authorList>
    </citation>
    <scope>NUCLEOTIDE SEQUENCE [LARGE SCALE GENOMIC DNA]</scope>
    <source>
        <strain>ATCC 8293 / DSM 20343 / BCRC 11652 / CCM 1803 / JCM 6124 / NCDO 523 / NBRC 100496 / NCIMB 8023 / NCTC 12954 / NRRL B-1118 / 37Y</strain>
    </source>
</reference>
<reference key="2">
    <citation type="journal article" date="1996" name="Int. J. Syst. Bacteriol.">
        <title>Analysis of the beta' subunit of DNA-dependent RNA polymerase does not support the hypothesis inferred from 16S rRNA analysis that Oenococcus oeni (formerly Leuconostoc oenos) is a tachytelic (fast-evolving) bacterium.</title>
        <authorList>
            <person name="Morse R."/>
            <person name="Collins M.D."/>
            <person name="O'Hanlon K."/>
            <person name="Wallbanks S."/>
            <person name="Richardson P.T."/>
        </authorList>
    </citation>
    <scope>NUCLEOTIDE SEQUENCE [GENOMIC DNA] OF 68-1056</scope>
</reference>
<name>RPOC_LEUMM</name>